<reference key="1">
    <citation type="submission" date="2005-07" db="EMBL/GenBank/DDBJ databases">
        <authorList>
            <person name="Mural R.J."/>
            <person name="Adams M.D."/>
            <person name="Myers E.W."/>
            <person name="Smith H.O."/>
            <person name="Venter J.C."/>
        </authorList>
    </citation>
    <scope>NUCLEOTIDE SEQUENCE [LARGE SCALE GENOMIC DNA]</scope>
</reference>
<reference key="2">
    <citation type="journal article" date="2004" name="Genome Res.">
        <title>The status, quality, and expansion of the NIH full-length cDNA project: the Mammalian Gene Collection (MGC).</title>
        <authorList>
            <consortium name="The MGC Project Team"/>
        </authorList>
    </citation>
    <scope>NUCLEOTIDE SEQUENCE [LARGE SCALE MRNA]</scope>
    <source>
        <tissue>Prostate</tissue>
    </source>
</reference>
<reference key="3">
    <citation type="journal article" date="2012" name="Nat. Commun.">
        <title>Quantitative maps of protein phosphorylation sites across 14 different rat organs and tissues.</title>
        <authorList>
            <person name="Lundby A."/>
            <person name="Secher A."/>
            <person name="Lage K."/>
            <person name="Nordsborg N.B."/>
            <person name="Dmytriyev A."/>
            <person name="Lundby C."/>
            <person name="Olsen J.V."/>
        </authorList>
    </citation>
    <scope>PHOSPHORYLATION [LARGE SCALE ANALYSIS] AT SER-274</scope>
    <scope>IDENTIFICATION BY MASS SPECTROMETRY [LARGE SCALE ANALYSIS]</scope>
</reference>
<feature type="chain" id="PRO_0000356281" description="Docking protein 3">
    <location>
        <begin position="1"/>
        <end position="444"/>
    </location>
</feature>
<feature type="domain" description="PH">
    <location>
        <begin position="7"/>
        <end position="123"/>
    </location>
</feature>
<feature type="domain" description="IRS-type PTB" evidence="4">
    <location>
        <begin position="157"/>
        <end position="261"/>
    </location>
</feature>
<feature type="region of interest" description="Disordered" evidence="5">
    <location>
        <begin position="47"/>
        <end position="66"/>
    </location>
</feature>
<feature type="region of interest" description="Disordered" evidence="5">
    <location>
        <begin position="354"/>
        <end position="390"/>
    </location>
</feature>
<feature type="compositionally biased region" description="Low complexity" evidence="5">
    <location>
        <begin position="358"/>
        <end position="376"/>
    </location>
</feature>
<feature type="modified residue" description="Phosphoserine" evidence="2">
    <location>
        <position position="138"/>
    </location>
</feature>
<feature type="modified residue" description="Phosphoserine" evidence="7">
    <location>
        <position position="274"/>
    </location>
</feature>
<feature type="modified residue" description="Phosphoserine" evidence="3">
    <location>
        <position position="308"/>
    </location>
</feature>
<feature type="modified residue" description="Phosphoserine" evidence="3">
    <location>
        <position position="314"/>
    </location>
</feature>
<feature type="modified residue" description="Phosphotyrosine" evidence="3">
    <location>
        <position position="325"/>
    </location>
</feature>
<feature type="modified residue" description="Phosphoserine" evidence="3">
    <location>
        <position position="371"/>
    </location>
</feature>
<keyword id="KW-1003">Cell membrane</keyword>
<keyword id="KW-0963">Cytoplasm</keyword>
<keyword id="KW-0472">Membrane</keyword>
<keyword id="KW-0597">Phosphoprotein</keyword>
<keyword id="KW-1185">Reference proteome</keyword>
<organism>
    <name type="scientific">Rattus norvegicus</name>
    <name type="common">Rat</name>
    <dbReference type="NCBI Taxonomy" id="10116"/>
    <lineage>
        <taxon>Eukaryota</taxon>
        <taxon>Metazoa</taxon>
        <taxon>Chordata</taxon>
        <taxon>Craniata</taxon>
        <taxon>Vertebrata</taxon>
        <taxon>Euteleostomi</taxon>
        <taxon>Mammalia</taxon>
        <taxon>Eutheria</taxon>
        <taxon>Euarchontoglires</taxon>
        <taxon>Glires</taxon>
        <taxon>Rodentia</taxon>
        <taxon>Myomorpha</taxon>
        <taxon>Muroidea</taxon>
        <taxon>Muridae</taxon>
        <taxon>Murinae</taxon>
        <taxon>Rattus</taxon>
    </lineage>
</organism>
<dbReference type="EMBL" id="CH474032">
    <property type="protein sequence ID" value="EDL93971.1"/>
    <property type="molecule type" value="Genomic_DNA"/>
</dbReference>
<dbReference type="EMBL" id="BC166772">
    <property type="protein sequence ID" value="AAI66772.1"/>
    <property type="molecule type" value="mRNA"/>
</dbReference>
<dbReference type="RefSeq" id="NP_001100806.1">
    <property type="nucleotide sequence ID" value="NM_001107336.1"/>
</dbReference>
<dbReference type="RefSeq" id="XP_006253681.1">
    <property type="nucleotide sequence ID" value="XM_006253619.5"/>
</dbReference>
<dbReference type="RefSeq" id="XP_063132406.1">
    <property type="nucleotide sequence ID" value="XM_063276336.1"/>
</dbReference>
<dbReference type="SMR" id="B2RYG7"/>
<dbReference type="FunCoup" id="B2RYG7">
    <property type="interactions" value="158"/>
</dbReference>
<dbReference type="STRING" id="10116.ENSRNOP00000018232"/>
<dbReference type="iPTMnet" id="B2RYG7"/>
<dbReference type="PhosphoSitePlus" id="B2RYG7"/>
<dbReference type="PaxDb" id="10116-ENSRNOP00000018232"/>
<dbReference type="PeptideAtlas" id="B2RYG7"/>
<dbReference type="Ensembl" id="ENSRNOT00000018232.5">
    <property type="protein sequence ID" value="ENSRNOP00000018232.3"/>
    <property type="gene ID" value="ENSRNOG00000013564.5"/>
</dbReference>
<dbReference type="GeneID" id="306760"/>
<dbReference type="KEGG" id="rno:306760"/>
<dbReference type="UCSC" id="RGD:1311840">
    <property type="organism name" value="rat"/>
</dbReference>
<dbReference type="AGR" id="RGD:1311840"/>
<dbReference type="CTD" id="79930"/>
<dbReference type="RGD" id="1311840">
    <property type="gene designation" value="Dok3"/>
</dbReference>
<dbReference type="eggNOG" id="KOG4047">
    <property type="taxonomic scope" value="Eukaryota"/>
</dbReference>
<dbReference type="GeneTree" id="ENSGT00940000161724"/>
<dbReference type="HOGENOM" id="CLU_569310_0_0_1"/>
<dbReference type="InParanoid" id="B2RYG7"/>
<dbReference type="OMA" id="AQHRQEW"/>
<dbReference type="PhylomeDB" id="B2RYG7"/>
<dbReference type="TreeFam" id="TF324994"/>
<dbReference type="Reactome" id="R-RNO-6798695">
    <property type="pathway name" value="Neutrophil degranulation"/>
</dbReference>
<dbReference type="PRO" id="PR:B2RYG7"/>
<dbReference type="Proteomes" id="UP000002494">
    <property type="component" value="Chromosome 17"/>
</dbReference>
<dbReference type="Proteomes" id="UP000234681">
    <property type="component" value="Chromosome 17"/>
</dbReference>
<dbReference type="Bgee" id="ENSRNOG00000013564">
    <property type="expression patterns" value="Expressed in spleen and 19 other cell types or tissues"/>
</dbReference>
<dbReference type="GO" id="GO:0005737">
    <property type="term" value="C:cytoplasm"/>
    <property type="evidence" value="ECO:0000266"/>
    <property type="project" value="RGD"/>
</dbReference>
<dbReference type="GO" id="GO:0005886">
    <property type="term" value="C:plasma membrane"/>
    <property type="evidence" value="ECO:0007669"/>
    <property type="project" value="UniProtKB-SubCell"/>
</dbReference>
<dbReference type="GO" id="GO:0007169">
    <property type="term" value="P:cell surface receptor protein tyrosine kinase signaling pathway"/>
    <property type="evidence" value="ECO:0000318"/>
    <property type="project" value="GO_Central"/>
</dbReference>
<dbReference type="GO" id="GO:0007265">
    <property type="term" value="P:Ras protein signal transduction"/>
    <property type="evidence" value="ECO:0000266"/>
    <property type="project" value="RGD"/>
</dbReference>
<dbReference type="CDD" id="cd01203">
    <property type="entry name" value="PTB_DOK1_DOK2_DOK3"/>
    <property type="match status" value="1"/>
</dbReference>
<dbReference type="FunFam" id="2.30.29.30:FF:000213">
    <property type="entry name" value="Docking protein 3"/>
    <property type="match status" value="1"/>
</dbReference>
<dbReference type="Gene3D" id="2.30.29.30">
    <property type="entry name" value="Pleckstrin-homology domain (PH domain)/Phosphotyrosine-binding domain (PTB)"/>
    <property type="match status" value="2"/>
</dbReference>
<dbReference type="InterPro" id="IPR050996">
    <property type="entry name" value="Docking_Protein_DOK"/>
</dbReference>
<dbReference type="InterPro" id="IPR037751">
    <property type="entry name" value="Dok1/2/3_PTB"/>
</dbReference>
<dbReference type="InterPro" id="IPR002404">
    <property type="entry name" value="IRS_PTB"/>
</dbReference>
<dbReference type="InterPro" id="IPR011993">
    <property type="entry name" value="PH-like_dom_sf"/>
</dbReference>
<dbReference type="InterPro" id="IPR001849">
    <property type="entry name" value="PH_domain"/>
</dbReference>
<dbReference type="PANTHER" id="PTHR21258:SF42">
    <property type="entry name" value="DOCKING PROTEIN 3"/>
    <property type="match status" value="1"/>
</dbReference>
<dbReference type="PANTHER" id="PTHR21258">
    <property type="entry name" value="DOCKING PROTEIN RELATED"/>
    <property type="match status" value="1"/>
</dbReference>
<dbReference type="Pfam" id="PF02174">
    <property type="entry name" value="IRS"/>
    <property type="match status" value="1"/>
</dbReference>
<dbReference type="SMART" id="SM01244">
    <property type="entry name" value="IRS"/>
    <property type="match status" value="1"/>
</dbReference>
<dbReference type="SMART" id="SM00233">
    <property type="entry name" value="PH"/>
    <property type="match status" value="1"/>
</dbReference>
<dbReference type="SMART" id="SM00310">
    <property type="entry name" value="PTBI"/>
    <property type="match status" value="1"/>
</dbReference>
<dbReference type="SUPFAM" id="SSF50729">
    <property type="entry name" value="PH domain-like"/>
    <property type="match status" value="2"/>
</dbReference>
<dbReference type="PROSITE" id="PS51064">
    <property type="entry name" value="IRS_PTB"/>
    <property type="match status" value="1"/>
</dbReference>
<protein>
    <recommendedName>
        <fullName>Docking protein 3</fullName>
    </recommendedName>
    <alternativeName>
        <fullName>Downstream of tyrosine kinase 3</fullName>
    </alternativeName>
</protein>
<accession>B2RYG7</accession>
<comment type="function">
    <text evidence="1">DOK proteins are enzymatically inert adaptor or scaffolding proteins. They provide a docking platform for the assembly of multimolecular signaling complexes. DOK3 is a negative regulator of JNK signaling in B-cells through interaction with INPP5D/SHIP1. May modulate ABL1 function (By similarity).</text>
</comment>
<comment type="subunit">
    <text evidence="1">On tyrosine phosphorylation, interacts with CSK and INPP5D/SHIP1 via their SH2 domains. Binds ABL1 through the PTB domain and in a kinase-dependent manner. Does not interact with RasGAP (By similarity).</text>
</comment>
<comment type="subcellular location">
    <subcellularLocation>
        <location evidence="1">Cytoplasm</location>
    </subcellularLocation>
    <subcellularLocation>
        <location evidence="1">Cell membrane</location>
        <topology evidence="1">Peripheral membrane protein</topology>
        <orientation evidence="1">Cytoplasmic side</orientation>
    </subcellularLocation>
</comment>
<comment type="domain">
    <text evidence="1">PTB domain mediates receptor interaction.</text>
</comment>
<comment type="PTM">
    <text evidence="1">Constitutively tyrosine-phosphorylated.</text>
</comment>
<comment type="PTM">
    <text evidence="1">On IL2 stimulation, phosphorylated on C-terminal tyrosine residues possibly by Src kinases. Can also be phosphorylated by ABL1 kinase (By similarity).</text>
</comment>
<comment type="similarity">
    <text evidence="6">Belongs to the DOK family. Type A subfamily.</text>
</comment>
<evidence type="ECO:0000250" key="1"/>
<evidence type="ECO:0000250" key="2">
    <source>
        <dbReference type="UniProtKB" id="Q7L591"/>
    </source>
</evidence>
<evidence type="ECO:0000250" key="3">
    <source>
        <dbReference type="UniProtKB" id="Q9QZK7"/>
    </source>
</evidence>
<evidence type="ECO:0000255" key="4">
    <source>
        <dbReference type="PROSITE-ProRule" id="PRU00389"/>
    </source>
</evidence>
<evidence type="ECO:0000256" key="5">
    <source>
        <dbReference type="SAM" id="MobiDB-lite"/>
    </source>
</evidence>
<evidence type="ECO:0000305" key="6"/>
<evidence type="ECO:0007744" key="7">
    <source>
    </source>
</evidence>
<sequence length="444" mass="48190">MESVETPVKDGLLYQQHMKFGKKCWRKVWALLYAGGPSGVARLESWDVRDGGLGPGGDRPAGPGRRGERRIIRLADCVSVLPADGESCPRDTGAFLITTTERSHLLAAQHRQSWMDPICQLAFPSTGECSSGSGQAESPKRGFVPMEENSIYSSWQEVAEFPVVVQRTEATTRCQLKGPYLLVLGQDDIQLRETSKPQACYSWPYRFLRKFGSDKGVFSFEAGRRCDSGEGLFAFSSPRAPDICGAVAAAIARQRERLPELAMSPPCPLPRALSLPSLEPPGELREVAPEYELAPSRKLPLTDPGPQSLPLLLSPTQDGTASSLYASVCKQTSKHKATVEHLYENVFMLEASPGLSNGGPEAQEGPPGGRSPLGSPIYHNSEELSWPGSAHDSNLEAQYRRLLELELDDAGGAGRPGAQTGIKAKLVTLLTRERKKGPAPCDRP</sequence>
<name>DOK3_RAT</name>
<gene>
    <name type="primary">Dok3</name>
</gene>
<proteinExistence type="evidence at protein level"/>